<organism>
    <name type="scientific">Tetradesmus obliquus</name>
    <name type="common">Green alga</name>
    <name type="synonym">Acutodesmus obliquus</name>
    <dbReference type="NCBI Taxonomy" id="3088"/>
    <lineage>
        <taxon>Eukaryota</taxon>
        <taxon>Viridiplantae</taxon>
        <taxon>Chlorophyta</taxon>
        <taxon>core chlorophytes</taxon>
        <taxon>Chlorophyceae</taxon>
        <taxon>CS clade</taxon>
        <taxon>Sphaeropleales</taxon>
        <taxon>Scenedesmaceae</taxon>
        <taxon>Tetradesmus</taxon>
    </lineage>
</organism>
<sequence>MTRVKRGNVSRKRHKKVLNLTKGFRGAASLLFRTANQQNMKALRYSYANRRKKKRNFRRLWITRVNAAIRAYGFNYSEFLYVLKNSNILLNRKILAQLAICDPDTFFKFIMSIQ</sequence>
<geneLocation type="chloroplast"/>
<evidence type="ECO:0000255" key="1">
    <source>
        <dbReference type="HAMAP-Rule" id="MF_00382"/>
    </source>
</evidence>
<evidence type="ECO:0000305" key="2"/>
<name>RK20_TETOB</name>
<feature type="chain" id="PRO_0000276425" description="Large ribosomal subunit protein bL20c">
    <location>
        <begin position="1"/>
        <end position="114"/>
    </location>
</feature>
<dbReference type="EMBL" id="DQ396875">
    <property type="protein sequence ID" value="ABD48258.1"/>
    <property type="molecule type" value="Genomic_DNA"/>
</dbReference>
<dbReference type="RefSeq" id="YP_635975.1">
    <property type="nucleotide sequence ID" value="NC_008101.1"/>
</dbReference>
<dbReference type="SMR" id="Q1KVU9"/>
<dbReference type="GeneID" id="4099836"/>
<dbReference type="GO" id="GO:0009507">
    <property type="term" value="C:chloroplast"/>
    <property type="evidence" value="ECO:0007669"/>
    <property type="project" value="UniProtKB-SubCell"/>
</dbReference>
<dbReference type="GO" id="GO:1990904">
    <property type="term" value="C:ribonucleoprotein complex"/>
    <property type="evidence" value="ECO:0007669"/>
    <property type="project" value="UniProtKB-KW"/>
</dbReference>
<dbReference type="GO" id="GO:0005840">
    <property type="term" value="C:ribosome"/>
    <property type="evidence" value="ECO:0007669"/>
    <property type="project" value="UniProtKB-KW"/>
</dbReference>
<dbReference type="GO" id="GO:0019843">
    <property type="term" value="F:rRNA binding"/>
    <property type="evidence" value="ECO:0007669"/>
    <property type="project" value="UniProtKB-UniRule"/>
</dbReference>
<dbReference type="GO" id="GO:0003735">
    <property type="term" value="F:structural constituent of ribosome"/>
    <property type="evidence" value="ECO:0007669"/>
    <property type="project" value="InterPro"/>
</dbReference>
<dbReference type="GO" id="GO:0000027">
    <property type="term" value="P:ribosomal large subunit assembly"/>
    <property type="evidence" value="ECO:0007669"/>
    <property type="project" value="UniProtKB-UniRule"/>
</dbReference>
<dbReference type="GO" id="GO:0006412">
    <property type="term" value="P:translation"/>
    <property type="evidence" value="ECO:0007669"/>
    <property type="project" value="InterPro"/>
</dbReference>
<dbReference type="CDD" id="cd07026">
    <property type="entry name" value="Ribosomal_L20"/>
    <property type="match status" value="1"/>
</dbReference>
<dbReference type="FunFam" id="1.10.1900.20:FF:000001">
    <property type="entry name" value="50S ribosomal protein L20"/>
    <property type="match status" value="1"/>
</dbReference>
<dbReference type="Gene3D" id="6.10.160.10">
    <property type="match status" value="1"/>
</dbReference>
<dbReference type="Gene3D" id="1.10.1900.20">
    <property type="entry name" value="Ribosomal protein L20"/>
    <property type="match status" value="1"/>
</dbReference>
<dbReference type="HAMAP" id="MF_00382">
    <property type="entry name" value="Ribosomal_bL20"/>
    <property type="match status" value="1"/>
</dbReference>
<dbReference type="InterPro" id="IPR005813">
    <property type="entry name" value="Ribosomal_bL20"/>
</dbReference>
<dbReference type="InterPro" id="IPR049946">
    <property type="entry name" value="RIBOSOMAL_L20_CS"/>
</dbReference>
<dbReference type="InterPro" id="IPR035566">
    <property type="entry name" value="Ribosomal_protein_bL20_C"/>
</dbReference>
<dbReference type="NCBIfam" id="TIGR01032">
    <property type="entry name" value="rplT_bact"/>
    <property type="match status" value="1"/>
</dbReference>
<dbReference type="PANTHER" id="PTHR10986">
    <property type="entry name" value="39S RIBOSOMAL PROTEIN L20"/>
    <property type="match status" value="1"/>
</dbReference>
<dbReference type="Pfam" id="PF00453">
    <property type="entry name" value="Ribosomal_L20"/>
    <property type="match status" value="1"/>
</dbReference>
<dbReference type="PRINTS" id="PR00062">
    <property type="entry name" value="RIBOSOMALL20"/>
</dbReference>
<dbReference type="SUPFAM" id="SSF74731">
    <property type="entry name" value="Ribosomal protein L20"/>
    <property type="match status" value="1"/>
</dbReference>
<dbReference type="PROSITE" id="PS00937">
    <property type="entry name" value="RIBOSOMAL_L20"/>
    <property type="match status" value="1"/>
</dbReference>
<comment type="function">
    <text evidence="1">Binds directly to 23S ribosomal RNA and is necessary for the in vitro assembly process of the 50S ribosomal subunit. It is not involved in the protein synthesizing functions of that subunit.</text>
</comment>
<comment type="subcellular location">
    <subcellularLocation>
        <location>Plastid</location>
        <location>Chloroplast</location>
    </subcellularLocation>
</comment>
<comment type="similarity">
    <text evidence="1">Belongs to the bacterial ribosomal protein bL20 family.</text>
</comment>
<keyword id="KW-0150">Chloroplast</keyword>
<keyword id="KW-0934">Plastid</keyword>
<keyword id="KW-0687">Ribonucleoprotein</keyword>
<keyword id="KW-0689">Ribosomal protein</keyword>
<keyword id="KW-0694">RNA-binding</keyword>
<keyword id="KW-0699">rRNA-binding</keyword>
<protein>
    <recommendedName>
        <fullName evidence="1">Large ribosomal subunit protein bL20c</fullName>
    </recommendedName>
    <alternativeName>
        <fullName evidence="2">50S ribosomal protein L20, chloroplastic</fullName>
    </alternativeName>
</protein>
<proteinExistence type="inferred from homology"/>
<gene>
    <name evidence="1" type="primary">rpl20</name>
</gene>
<reference key="1">
    <citation type="journal article" date="2006" name="BMC Evol. Biol.">
        <title>The complete chloroplast genome sequence of the chlorophycean green alga Scenedesmus obliquus reveals a compact gene organization and a biased distribution of genes on the two DNA strands.</title>
        <authorList>
            <person name="de Cambiaire J.-C."/>
            <person name="Otis C."/>
            <person name="Lemieux C."/>
            <person name="Turmel M."/>
        </authorList>
    </citation>
    <scope>NUCLEOTIDE SEQUENCE [LARGE SCALE GENOMIC DNA]</scope>
    <source>
        <strain>UTEX 393</strain>
    </source>
</reference>
<accession>Q1KVU9</accession>